<comment type="function">
    <text evidence="1">Component of the ASTRA complex involved in chromatin remodeling.</text>
</comment>
<comment type="subunit">
    <text evidence="1">Component of the ASTRA chromatin remodeling machinery complex.</text>
</comment>
<comment type="subcellular location">
    <subcellularLocation>
        <location evidence="1">Nucleus</location>
    </subcellularLocation>
</comment>
<comment type="similarity">
    <text evidence="3">Belongs to the WD repeat ASA1 family.</text>
</comment>
<dbReference type="EMBL" id="CU928175">
    <property type="protein sequence ID" value="CAR27447.1"/>
    <property type="molecule type" value="Genomic_DNA"/>
</dbReference>
<dbReference type="RefSeq" id="XP_002496380.1">
    <property type="nucleotide sequence ID" value="XM_002496335.1"/>
</dbReference>
<dbReference type="FunCoup" id="C5DUI6">
    <property type="interactions" value="68"/>
</dbReference>
<dbReference type="STRING" id="559307.C5DUI6"/>
<dbReference type="GeneID" id="8203611"/>
<dbReference type="KEGG" id="zro:ZYRO0C17050g"/>
<dbReference type="HOGENOM" id="CLU_045414_1_0_1"/>
<dbReference type="InParanoid" id="C5DUI6"/>
<dbReference type="Proteomes" id="UP000008536">
    <property type="component" value="Chromosome C"/>
</dbReference>
<dbReference type="GO" id="GO:0005634">
    <property type="term" value="C:nucleus"/>
    <property type="evidence" value="ECO:0007669"/>
    <property type="project" value="UniProtKB-SubCell"/>
</dbReference>
<dbReference type="GO" id="GO:0006325">
    <property type="term" value="P:chromatin organization"/>
    <property type="evidence" value="ECO:0007669"/>
    <property type="project" value="UniProtKB-KW"/>
</dbReference>
<dbReference type="Gene3D" id="2.130.10.10">
    <property type="entry name" value="YVTN repeat-like/Quinoprotein amine dehydrogenase"/>
    <property type="match status" value="1"/>
</dbReference>
<dbReference type="InterPro" id="IPR015943">
    <property type="entry name" value="WD40/YVTN_repeat-like_dom_sf"/>
</dbReference>
<dbReference type="InterPro" id="IPR036322">
    <property type="entry name" value="WD40_repeat_dom_sf"/>
</dbReference>
<dbReference type="SUPFAM" id="SSF50978">
    <property type="entry name" value="WD40 repeat-like"/>
    <property type="match status" value="1"/>
</dbReference>
<protein>
    <recommendedName>
        <fullName>ASTRA-associated protein 1</fullName>
    </recommendedName>
</protein>
<proteinExistence type="inferred from homology"/>
<accession>C5DUI6</accession>
<name>ASA1_ZYGRC</name>
<gene>
    <name type="primary">ASA1</name>
    <name type="ordered locus">ZYRO0C17050g</name>
</gene>
<feature type="chain" id="PRO_0000402229" description="ASTRA-associated protein 1">
    <location>
        <begin position="1"/>
        <end position="397"/>
    </location>
</feature>
<feature type="repeat" description="WD 1">
    <location>
        <begin position="16"/>
        <end position="56"/>
    </location>
</feature>
<feature type="repeat" description="WD 2">
    <location>
        <begin position="212"/>
        <end position="252"/>
    </location>
</feature>
<feature type="region of interest" description="Disordered" evidence="2">
    <location>
        <begin position="324"/>
        <end position="356"/>
    </location>
</feature>
<feature type="compositionally biased region" description="Low complexity" evidence="2">
    <location>
        <begin position="332"/>
        <end position="356"/>
    </location>
</feature>
<sequence length="397" mass="45072">MNPIQLPEYTLRFHKSSVTDLLVLDLPQEVAPLLVSGDATGKICLWDLIRRRPISSHCIENEPQIVALQYVDDGLLAVLDKQHKLRFLKIDGSWEQVYEIPVNTLNFANFLVQRLDTGWYRLICCNTQDSESIDIYEFHLSSLHSLKRVHKGLKFYQAISSLILPAGFKLDKLGIVMKFTEWHGVIFCGMESGFVIGFNLIDDGQVEIVYVSHVHYPNPILDLYPGKDNILSSSTDNKIGIHDLNCQQDERPNFERQSPILLKKELHSLSANFKQVPISEVAHIKKIENLLLLSSWFGETVVTDEQIELLAKFSKSKSIVEVNENPQGNLQSNNTSSKSKNPNCKVSSLEGLSSSNSKDSNYVISTNVGQRRRIERFLQNSWCIIGYDDGNIAFHRL</sequence>
<evidence type="ECO:0000250" key="1"/>
<evidence type="ECO:0000256" key="2">
    <source>
        <dbReference type="SAM" id="MobiDB-lite"/>
    </source>
</evidence>
<evidence type="ECO:0000305" key="3"/>
<organism>
    <name type="scientific">Zygosaccharomyces rouxii (strain ATCC 2623 / CBS 732 / NBRC 1130 / NCYC 568 / NRRL Y-229)</name>
    <dbReference type="NCBI Taxonomy" id="559307"/>
    <lineage>
        <taxon>Eukaryota</taxon>
        <taxon>Fungi</taxon>
        <taxon>Dikarya</taxon>
        <taxon>Ascomycota</taxon>
        <taxon>Saccharomycotina</taxon>
        <taxon>Saccharomycetes</taxon>
        <taxon>Saccharomycetales</taxon>
        <taxon>Saccharomycetaceae</taxon>
        <taxon>Zygosaccharomyces</taxon>
    </lineage>
</organism>
<reference key="1">
    <citation type="journal article" date="2009" name="Genome Res.">
        <title>Comparative genomics of protoploid Saccharomycetaceae.</title>
        <authorList>
            <consortium name="The Genolevures Consortium"/>
            <person name="Souciet J.-L."/>
            <person name="Dujon B."/>
            <person name="Gaillardin C."/>
            <person name="Johnston M."/>
            <person name="Baret P.V."/>
            <person name="Cliften P."/>
            <person name="Sherman D.J."/>
            <person name="Weissenbach J."/>
            <person name="Westhof E."/>
            <person name="Wincker P."/>
            <person name="Jubin C."/>
            <person name="Poulain J."/>
            <person name="Barbe V."/>
            <person name="Segurens B."/>
            <person name="Artiguenave F."/>
            <person name="Anthouard V."/>
            <person name="Vacherie B."/>
            <person name="Val M.-E."/>
            <person name="Fulton R.S."/>
            <person name="Minx P."/>
            <person name="Wilson R."/>
            <person name="Durrens P."/>
            <person name="Jean G."/>
            <person name="Marck C."/>
            <person name="Martin T."/>
            <person name="Nikolski M."/>
            <person name="Rolland T."/>
            <person name="Seret M.-L."/>
            <person name="Casaregola S."/>
            <person name="Despons L."/>
            <person name="Fairhead C."/>
            <person name="Fischer G."/>
            <person name="Lafontaine I."/>
            <person name="Leh V."/>
            <person name="Lemaire M."/>
            <person name="de Montigny J."/>
            <person name="Neuveglise C."/>
            <person name="Thierry A."/>
            <person name="Blanc-Lenfle I."/>
            <person name="Bleykasten C."/>
            <person name="Diffels J."/>
            <person name="Fritsch E."/>
            <person name="Frangeul L."/>
            <person name="Goeffon A."/>
            <person name="Jauniaux N."/>
            <person name="Kachouri-Lafond R."/>
            <person name="Payen C."/>
            <person name="Potier S."/>
            <person name="Pribylova L."/>
            <person name="Ozanne C."/>
            <person name="Richard G.-F."/>
            <person name="Sacerdot C."/>
            <person name="Straub M.-L."/>
            <person name="Talla E."/>
        </authorList>
    </citation>
    <scope>NUCLEOTIDE SEQUENCE [LARGE SCALE GENOMIC DNA]</scope>
    <source>
        <strain>ATCC 2623 / CBS 732 / BCRC 21506 / NBRC 1130 / NCYC 568 / NRRL Y-229</strain>
    </source>
</reference>
<keyword id="KW-0156">Chromatin regulator</keyword>
<keyword id="KW-0539">Nucleus</keyword>
<keyword id="KW-1185">Reference proteome</keyword>
<keyword id="KW-0677">Repeat</keyword>
<keyword id="KW-0853">WD repeat</keyword>